<accession>Q83AY0</accession>
<proteinExistence type="evidence at protein level"/>
<feature type="chain" id="PRO_0000322128" description="Stringent starvation protein A homolog">
    <location>
        <begin position="1"/>
        <end position="209"/>
    </location>
</feature>
<feature type="domain" description="GST N-terminal">
    <location>
        <begin position="5"/>
        <end position="83"/>
    </location>
</feature>
<feature type="domain" description="GST C-terminal">
    <location>
        <begin position="88"/>
        <end position="203"/>
    </location>
</feature>
<sequence length="209" mass="24415">MLKRSIMTLYSGPLDIYSHQVRIVLAEKGVTVDIHNVDANHPSEDLIELNPYATLPTLVDRDLVLFESRVIMEYLDERFPHPPLLPVYPVARSRCRLLMYRIERNFYHSMKIIEEGTPKQAETEREFLTKELIELDPVFGEKTYFMNDDFTLVDCVMAPLLWRLPHLGVHVPPRAAKSMYKYKKLIFERESFKASLSESESELREVDGI</sequence>
<name>SSPA_COXBU</name>
<gene>
    <name type="primary">sspA</name>
    <name type="ordered locus">CBU_1747</name>
</gene>
<organism>
    <name type="scientific">Coxiella burnetii (strain RSA 493 / Nine Mile phase I)</name>
    <dbReference type="NCBI Taxonomy" id="227377"/>
    <lineage>
        <taxon>Bacteria</taxon>
        <taxon>Pseudomonadati</taxon>
        <taxon>Pseudomonadota</taxon>
        <taxon>Gammaproteobacteria</taxon>
        <taxon>Legionellales</taxon>
        <taxon>Coxiellaceae</taxon>
        <taxon>Coxiella</taxon>
    </lineage>
</organism>
<reference key="1">
    <citation type="journal article" date="2003" name="Proc. Natl. Acad. Sci. U.S.A.">
        <title>Complete genome sequence of the Q-fever pathogen, Coxiella burnetii.</title>
        <authorList>
            <person name="Seshadri R."/>
            <person name="Paulsen I.T."/>
            <person name="Eisen J.A."/>
            <person name="Read T.D."/>
            <person name="Nelson K.E."/>
            <person name="Nelson W.C."/>
            <person name="Ward N.L."/>
            <person name="Tettelin H."/>
            <person name="Davidsen T.M."/>
            <person name="Beanan M.J."/>
            <person name="DeBoy R.T."/>
            <person name="Daugherty S.C."/>
            <person name="Brinkac L.M."/>
            <person name="Madupu R."/>
            <person name="Dodson R.J."/>
            <person name="Khouri H.M."/>
            <person name="Lee K.H."/>
            <person name="Carty H.A."/>
            <person name="Scanlan D."/>
            <person name="Heinzen R.A."/>
            <person name="Thompson H.A."/>
            <person name="Samuel J.E."/>
            <person name="Fraser C.M."/>
            <person name="Heidelberg J.F."/>
        </authorList>
    </citation>
    <scope>NUCLEOTIDE SEQUENCE [LARGE SCALE GENOMIC DNA]</scope>
    <source>
        <strain>RSA 493 / Nine Mile phase I</strain>
    </source>
</reference>
<reference key="2">
    <citation type="journal article" date="2007" name="Infect. Immun.">
        <title>Proteome and antigen profiling of Coxiella burnetii developmental forms.</title>
        <authorList>
            <person name="Coleman S.A."/>
            <person name="Fischer E.R."/>
            <person name="Cockrell D.C."/>
            <person name="Voth D.E."/>
            <person name="Howe D."/>
            <person name="Mead D.J."/>
            <person name="Samuel J.E."/>
            <person name="Heinzen R.A."/>
        </authorList>
    </citation>
    <scope>IDENTIFICATION BY MASS SPECTROMETRY</scope>
    <scope>DEVELOPMENTAL STAGE</scope>
    <source>
        <strain>Nine Mile Crazy / RSA 514</strain>
    </source>
</reference>
<dbReference type="EMBL" id="AE016828">
    <property type="protein sequence ID" value="AAO91241.2"/>
    <property type="status" value="ALT_INIT"/>
    <property type="molecule type" value="Genomic_DNA"/>
</dbReference>
<dbReference type="RefSeq" id="NP_820727.2">
    <property type="nucleotide sequence ID" value="NC_002971.3"/>
</dbReference>
<dbReference type="SMR" id="Q83AY0"/>
<dbReference type="STRING" id="227377.CBU_1747"/>
<dbReference type="EnsemblBacteria" id="AAO91241">
    <property type="protein sequence ID" value="AAO91241"/>
    <property type="gene ID" value="CBU_1747"/>
</dbReference>
<dbReference type="GeneID" id="1209658"/>
<dbReference type="KEGG" id="cbu:CBU_1747"/>
<dbReference type="PATRIC" id="fig|227377.7.peg.1736"/>
<dbReference type="eggNOG" id="COG0625">
    <property type="taxonomic scope" value="Bacteria"/>
</dbReference>
<dbReference type="HOGENOM" id="CLU_011226_9_3_6"/>
<dbReference type="OrthoDB" id="9781431at2"/>
<dbReference type="Proteomes" id="UP000002671">
    <property type="component" value="Chromosome"/>
</dbReference>
<dbReference type="GO" id="GO:0005737">
    <property type="term" value="C:cytoplasm"/>
    <property type="evidence" value="ECO:0000318"/>
    <property type="project" value="GO_Central"/>
</dbReference>
<dbReference type="CDD" id="cd03059">
    <property type="entry name" value="GST_N_SspA"/>
    <property type="match status" value="1"/>
</dbReference>
<dbReference type="Gene3D" id="1.20.1050.10">
    <property type="match status" value="1"/>
</dbReference>
<dbReference type="Gene3D" id="3.40.30.10">
    <property type="entry name" value="Glutaredoxin"/>
    <property type="match status" value="1"/>
</dbReference>
<dbReference type="InterPro" id="IPR010987">
    <property type="entry name" value="Glutathione-S-Trfase_C-like"/>
</dbReference>
<dbReference type="InterPro" id="IPR036282">
    <property type="entry name" value="Glutathione-S-Trfase_C_sf"/>
</dbReference>
<dbReference type="InterPro" id="IPR040079">
    <property type="entry name" value="Glutathione_S-Trfase"/>
</dbReference>
<dbReference type="InterPro" id="IPR004045">
    <property type="entry name" value="Glutathione_S-Trfase_N"/>
</dbReference>
<dbReference type="InterPro" id="IPR004046">
    <property type="entry name" value="GST_C"/>
</dbReference>
<dbReference type="InterPro" id="IPR050983">
    <property type="entry name" value="GST_Omega/HSP26"/>
</dbReference>
<dbReference type="InterPro" id="IPR034341">
    <property type="entry name" value="SspA_N"/>
</dbReference>
<dbReference type="InterPro" id="IPR036249">
    <property type="entry name" value="Thioredoxin-like_sf"/>
</dbReference>
<dbReference type="PANTHER" id="PTHR43968">
    <property type="match status" value="1"/>
</dbReference>
<dbReference type="PANTHER" id="PTHR43968:SF6">
    <property type="entry name" value="GLUTATHIONE S-TRANSFERASE OMEGA"/>
    <property type="match status" value="1"/>
</dbReference>
<dbReference type="Pfam" id="PF00043">
    <property type="entry name" value="GST_C"/>
    <property type="match status" value="1"/>
</dbReference>
<dbReference type="Pfam" id="PF02798">
    <property type="entry name" value="GST_N"/>
    <property type="match status" value="1"/>
</dbReference>
<dbReference type="SFLD" id="SFLDS00019">
    <property type="entry name" value="Glutathione_Transferase_(cytos"/>
    <property type="match status" value="1"/>
</dbReference>
<dbReference type="SFLD" id="SFLDG00358">
    <property type="entry name" value="Main_(cytGST)"/>
    <property type="match status" value="1"/>
</dbReference>
<dbReference type="SUPFAM" id="SSF47616">
    <property type="entry name" value="GST C-terminal domain-like"/>
    <property type="match status" value="1"/>
</dbReference>
<dbReference type="SUPFAM" id="SSF52833">
    <property type="entry name" value="Thioredoxin-like"/>
    <property type="match status" value="1"/>
</dbReference>
<dbReference type="PROSITE" id="PS50405">
    <property type="entry name" value="GST_CTER"/>
    <property type="match status" value="1"/>
</dbReference>
<dbReference type="PROSITE" id="PS50404">
    <property type="entry name" value="GST_NTER"/>
    <property type="match status" value="1"/>
</dbReference>
<comment type="function">
    <text evidence="1">Forms an equimolar complex with the RNA polymerase holoenzyme (RNAP) but not with the core enzyme.</text>
</comment>
<comment type="developmental stage">
    <text evidence="2">More than twofold more abundant in the large cell variant (LCV) stage than in the small cell variant (SCV) stage (at protein level). LCVs are more metabolically active than SCVs.</text>
</comment>
<comment type="similarity">
    <text evidence="3">Belongs to the GST superfamily. HSP26 family.</text>
</comment>
<comment type="sequence caution" evidence="3">
    <conflict type="erroneous initiation">
        <sequence resource="EMBL-CDS" id="AAO91241"/>
    </conflict>
</comment>
<evidence type="ECO:0000250" key="1"/>
<evidence type="ECO:0000269" key="2">
    <source>
    </source>
</evidence>
<evidence type="ECO:0000305" key="3"/>
<protein>
    <recommendedName>
        <fullName>Stringent starvation protein A homolog</fullName>
    </recommendedName>
</protein>
<keyword id="KW-1185">Reference proteome</keyword>